<comment type="miscellaneous">
    <text evidence="4">There are two types of hair/microfibrillar keratin, I (acidic) and II (neutral to basic).</text>
</comment>
<comment type="similarity">
    <text evidence="3">Belongs to the intermediate filament family.</text>
</comment>
<accession>Q8K0Y2</accession>
<accession>Q9D7C4</accession>
<dbReference type="EMBL" id="AK009363">
    <property type="protein sequence ID" value="BAB26243.1"/>
    <property type="molecule type" value="mRNA"/>
</dbReference>
<dbReference type="EMBL" id="AK037251">
    <property type="protein sequence ID" value="BAC29777.1"/>
    <property type="molecule type" value="mRNA"/>
</dbReference>
<dbReference type="EMBL" id="AL592545">
    <property type="protein sequence ID" value="CAM22478.1"/>
    <property type="molecule type" value="Genomic_DNA"/>
</dbReference>
<dbReference type="EMBL" id="CH466662">
    <property type="protein sequence ID" value="EDL02593.1"/>
    <property type="molecule type" value="Genomic_DNA"/>
</dbReference>
<dbReference type="EMBL" id="BC029257">
    <property type="protein sequence ID" value="AAH29257.1"/>
    <property type="molecule type" value="mRNA"/>
</dbReference>
<dbReference type="CCDS" id="CCDS25403.1"/>
<dbReference type="RefSeq" id="NP_082259.2">
    <property type="nucleotide sequence ID" value="NM_027983.3"/>
</dbReference>
<dbReference type="SMR" id="Q8K0Y2"/>
<dbReference type="BioGRID" id="215008">
    <property type="interactions" value="1"/>
</dbReference>
<dbReference type="FunCoup" id="Q8K0Y2">
    <property type="interactions" value="158"/>
</dbReference>
<dbReference type="IntAct" id="Q8K0Y2">
    <property type="interactions" value="1"/>
</dbReference>
<dbReference type="MINT" id="Q8K0Y2"/>
<dbReference type="STRING" id="10090.ENSMUSP00000018399"/>
<dbReference type="PhosphoSitePlus" id="Q8K0Y2"/>
<dbReference type="jPOST" id="Q8K0Y2"/>
<dbReference type="PaxDb" id="10090-ENSMUSP00000018399"/>
<dbReference type="PeptideAtlas" id="Q8K0Y2"/>
<dbReference type="ProteomicsDB" id="264880"/>
<dbReference type="DNASU" id="71888"/>
<dbReference type="Ensembl" id="ENSMUST00000018399.3">
    <property type="protein sequence ID" value="ENSMUSP00000018399.3"/>
    <property type="gene ID" value="ENSMUSG00000035592.3"/>
</dbReference>
<dbReference type="GeneID" id="71888"/>
<dbReference type="KEGG" id="mmu:71888"/>
<dbReference type="UCSC" id="uc007lka.2">
    <property type="organism name" value="mouse"/>
</dbReference>
<dbReference type="AGR" id="MGI:1919138"/>
<dbReference type="CTD" id="3883"/>
<dbReference type="MGI" id="MGI:1919138">
    <property type="gene designation" value="Krt33a"/>
</dbReference>
<dbReference type="VEuPathDB" id="HostDB:ENSMUSG00000035592"/>
<dbReference type="eggNOG" id="ENOG502SNBF">
    <property type="taxonomic scope" value="Eukaryota"/>
</dbReference>
<dbReference type="GeneTree" id="ENSGT00940000153980"/>
<dbReference type="HOGENOM" id="CLU_012560_8_0_1"/>
<dbReference type="InParanoid" id="Q8K0Y2"/>
<dbReference type="OMA" id="XYETELS"/>
<dbReference type="OrthoDB" id="2441647at2759"/>
<dbReference type="PhylomeDB" id="Q8K0Y2"/>
<dbReference type="TreeFam" id="TF332742"/>
<dbReference type="Reactome" id="R-MMU-6805567">
    <property type="pathway name" value="Keratinization"/>
</dbReference>
<dbReference type="Reactome" id="R-MMU-6809371">
    <property type="pathway name" value="Formation of the cornified envelope"/>
</dbReference>
<dbReference type="BioGRID-ORCS" id="71888">
    <property type="hits" value="4 hits in 76 CRISPR screens"/>
</dbReference>
<dbReference type="PRO" id="PR:Q8K0Y2"/>
<dbReference type="Proteomes" id="UP000000589">
    <property type="component" value="Chromosome 11"/>
</dbReference>
<dbReference type="RNAct" id="Q8K0Y2">
    <property type="molecule type" value="protein"/>
</dbReference>
<dbReference type="Bgee" id="ENSMUSG00000035592">
    <property type="expression patterns" value="Expressed in lip and 15 other cell types or tissues"/>
</dbReference>
<dbReference type="GO" id="GO:0005882">
    <property type="term" value="C:intermediate filament"/>
    <property type="evidence" value="ECO:0007669"/>
    <property type="project" value="UniProtKB-KW"/>
</dbReference>
<dbReference type="GO" id="GO:0005198">
    <property type="term" value="F:structural molecule activity"/>
    <property type="evidence" value="ECO:0007669"/>
    <property type="project" value="InterPro"/>
</dbReference>
<dbReference type="FunFam" id="1.20.5.1160:FF:000002">
    <property type="entry name" value="Type I keratin 10"/>
    <property type="match status" value="1"/>
</dbReference>
<dbReference type="FunFam" id="1.20.5.170:FF:000002">
    <property type="entry name" value="Type I keratin KA11"/>
    <property type="match status" value="1"/>
</dbReference>
<dbReference type="FunFam" id="1.20.5.500:FF:000001">
    <property type="entry name" value="Type II keratin 23"/>
    <property type="match status" value="1"/>
</dbReference>
<dbReference type="Gene3D" id="1.20.5.170">
    <property type="match status" value="1"/>
</dbReference>
<dbReference type="Gene3D" id="1.20.5.500">
    <property type="entry name" value="Single helix bin"/>
    <property type="match status" value="1"/>
</dbReference>
<dbReference type="Gene3D" id="1.20.5.1160">
    <property type="entry name" value="Vasodilator-stimulated phosphoprotein"/>
    <property type="match status" value="1"/>
</dbReference>
<dbReference type="InterPro" id="IPR018039">
    <property type="entry name" value="IF_conserved"/>
</dbReference>
<dbReference type="InterPro" id="IPR039008">
    <property type="entry name" value="IF_rod_dom"/>
</dbReference>
<dbReference type="InterPro" id="IPR002957">
    <property type="entry name" value="Keratin_I"/>
</dbReference>
<dbReference type="PANTHER" id="PTHR23239">
    <property type="entry name" value="INTERMEDIATE FILAMENT"/>
    <property type="match status" value="1"/>
</dbReference>
<dbReference type="PANTHER" id="PTHR23239:SF97">
    <property type="entry name" value="KERATIN, TYPE I CUTICULAR HA1"/>
    <property type="match status" value="1"/>
</dbReference>
<dbReference type="Pfam" id="PF00038">
    <property type="entry name" value="Filament"/>
    <property type="match status" value="1"/>
</dbReference>
<dbReference type="PRINTS" id="PR01248">
    <property type="entry name" value="TYPE1KERATIN"/>
</dbReference>
<dbReference type="SMART" id="SM01391">
    <property type="entry name" value="Filament"/>
    <property type="match status" value="1"/>
</dbReference>
<dbReference type="SUPFAM" id="SSF64593">
    <property type="entry name" value="Intermediate filament protein, coiled coil region"/>
    <property type="match status" value="2"/>
</dbReference>
<dbReference type="PROSITE" id="PS00226">
    <property type="entry name" value="IF_ROD_1"/>
    <property type="match status" value="1"/>
</dbReference>
<dbReference type="PROSITE" id="PS51842">
    <property type="entry name" value="IF_ROD_2"/>
    <property type="match status" value="1"/>
</dbReference>
<gene>
    <name evidence="9" type="primary">Krt33a</name>
</gene>
<keyword id="KW-0175">Coiled coil</keyword>
<keyword id="KW-0403">Intermediate filament</keyword>
<keyword id="KW-0416">Keratin</keyword>
<keyword id="KW-1185">Reference proteome</keyword>
<protein>
    <recommendedName>
        <fullName evidence="1">Keratin, type I cuticular Ha3-I</fullName>
    </recommendedName>
    <alternativeName>
        <fullName>Hair keratin, type I Ha3-I</fullName>
    </alternativeName>
    <alternativeName>
        <fullName evidence="1 5">Keratin-33A</fullName>
        <shortName>K33A</shortName>
    </alternativeName>
</protein>
<name>KT33A_MOUSE</name>
<organism>
    <name type="scientific">Mus musculus</name>
    <name type="common">Mouse</name>
    <dbReference type="NCBI Taxonomy" id="10090"/>
    <lineage>
        <taxon>Eukaryota</taxon>
        <taxon>Metazoa</taxon>
        <taxon>Chordata</taxon>
        <taxon>Craniata</taxon>
        <taxon>Vertebrata</taxon>
        <taxon>Euteleostomi</taxon>
        <taxon>Mammalia</taxon>
        <taxon>Eutheria</taxon>
        <taxon>Euarchontoglires</taxon>
        <taxon>Glires</taxon>
        <taxon>Rodentia</taxon>
        <taxon>Myomorpha</taxon>
        <taxon>Muroidea</taxon>
        <taxon>Muridae</taxon>
        <taxon>Murinae</taxon>
        <taxon>Mus</taxon>
        <taxon>Mus</taxon>
    </lineage>
</organism>
<reference evidence="7" key="1">
    <citation type="journal article" date="2005" name="Science">
        <title>The transcriptional landscape of the mammalian genome.</title>
        <authorList>
            <person name="Carninci P."/>
            <person name="Kasukawa T."/>
            <person name="Katayama S."/>
            <person name="Gough J."/>
            <person name="Frith M.C."/>
            <person name="Maeda N."/>
            <person name="Oyama R."/>
            <person name="Ravasi T."/>
            <person name="Lenhard B."/>
            <person name="Wells C."/>
            <person name="Kodzius R."/>
            <person name="Shimokawa K."/>
            <person name="Bajic V.B."/>
            <person name="Brenner S.E."/>
            <person name="Batalov S."/>
            <person name="Forrest A.R."/>
            <person name="Zavolan M."/>
            <person name="Davis M.J."/>
            <person name="Wilming L.G."/>
            <person name="Aidinis V."/>
            <person name="Allen J.E."/>
            <person name="Ambesi-Impiombato A."/>
            <person name="Apweiler R."/>
            <person name="Aturaliya R.N."/>
            <person name="Bailey T.L."/>
            <person name="Bansal M."/>
            <person name="Baxter L."/>
            <person name="Beisel K.W."/>
            <person name="Bersano T."/>
            <person name="Bono H."/>
            <person name="Chalk A.M."/>
            <person name="Chiu K.P."/>
            <person name="Choudhary V."/>
            <person name="Christoffels A."/>
            <person name="Clutterbuck D.R."/>
            <person name="Crowe M.L."/>
            <person name="Dalla E."/>
            <person name="Dalrymple B.P."/>
            <person name="de Bono B."/>
            <person name="Della Gatta G."/>
            <person name="di Bernardo D."/>
            <person name="Down T."/>
            <person name="Engstrom P."/>
            <person name="Fagiolini M."/>
            <person name="Faulkner G."/>
            <person name="Fletcher C.F."/>
            <person name="Fukushima T."/>
            <person name="Furuno M."/>
            <person name="Futaki S."/>
            <person name="Gariboldi M."/>
            <person name="Georgii-Hemming P."/>
            <person name="Gingeras T.R."/>
            <person name="Gojobori T."/>
            <person name="Green R.E."/>
            <person name="Gustincich S."/>
            <person name="Harbers M."/>
            <person name="Hayashi Y."/>
            <person name="Hensch T.K."/>
            <person name="Hirokawa N."/>
            <person name="Hill D."/>
            <person name="Huminiecki L."/>
            <person name="Iacono M."/>
            <person name="Ikeo K."/>
            <person name="Iwama A."/>
            <person name="Ishikawa T."/>
            <person name="Jakt M."/>
            <person name="Kanapin A."/>
            <person name="Katoh M."/>
            <person name="Kawasawa Y."/>
            <person name="Kelso J."/>
            <person name="Kitamura H."/>
            <person name="Kitano H."/>
            <person name="Kollias G."/>
            <person name="Krishnan S.P."/>
            <person name="Kruger A."/>
            <person name="Kummerfeld S.K."/>
            <person name="Kurochkin I.V."/>
            <person name="Lareau L.F."/>
            <person name="Lazarevic D."/>
            <person name="Lipovich L."/>
            <person name="Liu J."/>
            <person name="Liuni S."/>
            <person name="McWilliam S."/>
            <person name="Madan Babu M."/>
            <person name="Madera M."/>
            <person name="Marchionni L."/>
            <person name="Matsuda H."/>
            <person name="Matsuzawa S."/>
            <person name="Miki H."/>
            <person name="Mignone F."/>
            <person name="Miyake S."/>
            <person name="Morris K."/>
            <person name="Mottagui-Tabar S."/>
            <person name="Mulder N."/>
            <person name="Nakano N."/>
            <person name="Nakauchi H."/>
            <person name="Ng P."/>
            <person name="Nilsson R."/>
            <person name="Nishiguchi S."/>
            <person name="Nishikawa S."/>
            <person name="Nori F."/>
            <person name="Ohara O."/>
            <person name="Okazaki Y."/>
            <person name="Orlando V."/>
            <person name="Pang K.C."/>
            <person name="Pavan W.J."/>
            <person name="Pavesi G."/>
            <person name="Pesole G."/>
            <person name="Petrovsky N."/>
            <person name="Piazza S."/>
            <person name="Reed J."/>
            <person name="Reid J.F."/>
            <person name="Ring B.Z."/>
            <person name="Ringwald M."/>
            <person name="Rost B."/>
            <person name="Ruan Y."/>
            <person name="Salzberg S.L."/>
            <person name="Sandelin A."/>
            <person name="Schneider C."/>
            <person name="Schoenbach C."/>
            <person name="Sekiguchi K."/>
            <person name="Semple C.A."/>
            <person name="Seno S."/>
            <person name="Sessa L."/>
            <person name="Sheng Y."/>
            <person name="Shibata Y."/>
            <person name="Shimada H."/>
            <person name="Shimada K."/>
            <person name="Silva D."/>
            <person name="Sinclair B."/>
            <person name="Sperling S."/>
            <person name="Stupka E."/>
            <person name="Sugiura K."/>
            <person name="Sultana R."/>
            <person name="Takenaka Y."/>
            <person name="Taki K."/>
            <person name="Tammoja K."/>
            <person name="Tan S.L."/>
            <person name="Tang S."/>
            <person name="Taylor M.S."/>
            <person name="Tegner J."/>
            <person name="Teichmann S.A."/>
            <person name="Ueda H.R."/>
            <person name="van Nimwegen E."/>
            <person name="Verardo R."/>
            <person name="Wei C.L."/>
            <person name="Yagi K."/>
            <person name="Yamanishi H."/>
            <person name="Zabarovsky E."/>
            <person name="Zhu S."/>
            <person name="Zimmer A."/>
            <person name="Hide W."/>
            <person name="Bult C."/>
            <person name="Grimmond S.M."/>
            <person name="Teasdale R.D."/>
            <person name="Liu E.T."/>
            <person name="Brusic V."/>
            <person name="Quackenbush J."/>
            <person name="Wahlestedt C."/>
            <person name="Mattick J.S."/>
            <person name="Hume D.A."/>
            <person name="Kai C."/>
            <person name="Sasaki D."/>
            <person name="Tomaru Y."/>
            <person name="Fukuda S."/>
            <person name="Kanamori-Katayama M."/>
            <person name="Suzuki M."/>
            <person name="Aoki J."/>
            <person name="Arakawa T."/>
            <person name="Iida J."/>
            <person name="Imamura K."/>
            <person name="Itoh M."/>
            <person name="Kato T."/>
            <person name="Kawaji H."/>
            <person name="Kawagashira N."/>
            <person name="Kawashima T."/>
            <person name="Kojima M."/>
            <person name="Kondo S."/>
            <person name="Konno H."/>
            <person name="Nakano K."/>
            <person name="Ninomiya N."/>
            <person name="Nishio T."/>
            <person name="Okada M."/>
            <person name="Plessy C."/>
            <person name="Shibata K."/>
            <person name="Shiraki T."/>
            <person name="Suzuki S."/>
            <person name="Tagami M."/>
            <person name="Waki K."/>
            <person name="Watahiki A."/>
            <person name="Okamura-Oho Y."/>
            <person name="Suzuki H."/>
            <person name="Kawai J."/>
            <person name="Hayashizaki Y."/>
        </authorList>
    </citation>
    <scope>NUCLEOTIDE SEQUENCE [LARGE SCALE MRNA]</scope>
    <source>
        <strain evidence="7">C57BL/6J</strain>
        <tissue evidence="7">Neonatal skin</tissue>
        <tissue evidence="6">Tongue</tissue>
    </source>
</reference>
<reference key="2">
    <citation type="journal article" date="2009" name="PLoS Biol.">
        <title>Lineage-specific biology revealed by a finished genome assembly of the mouse.</title>
        <authorList>
            <person name="Church D.M."/>
            <person name="Goodstadt L."/>
            <person name="Hillier L.W."/>
            <person name="Zody M.C."/>
            <person name="Goldstein S."/>
            <person name="She X."/>
            <person name="Bult C.J."/>
            <person name="Agarwala R."/>
            <person name="Cherry J.L."/>
            <person name="DiCuccio M."/>
            <person name="Hlavina W."/>
            <person name="Kapustin Y."/>
            <person name="Meric P."/>
            <person name="Maglott D."/>
            <person name="Birtle Z."/>
            <person name="Marques A.C."/>
            <person name="Graves T."/>
            <person name="Zhou S."/>
            <person name="Teague B."/>
            <person name="Potamousis K."/>
            <person name="Churas C."/>
            <person name="Place M."/>
            <person name="Herschleb J."/>
            <person name="Runnheim R."/>
            <person name="Forrest D."/>
            <person name="Amos-Landgraf J."/>
            <person name="Schwartz D.C."/>
            <person name="Cheng Z."/>
            <person name="Lindblad-Toh K."/>
            <person name="Eichler E.E."/>
            <person name="Ponting C.P."/>
        </authorList>
    </citation>
    <scope>NUCLEOTIDE SEQUENCE [LARGE SCALE GENOMIC DNA]</scope>
    <source>
        <strain>C57BL/6J</strain>
    </source>
</reference>
<reference evidence="8" key="3">
    <citation type="submission" date="2005-09" db="EMBL/GenBank/DDBJ databases">
        <authorList>
            <person name="Mural R.J."/>
            <person name="Adams M.D."/>
            <person name="Myers E.W."/>
            <person name="Smith H.O."/>
            <person name="Venter J.C."/>
        </authorList>
    </citation>
    <scope>NUCLEOTIDE SEQUENCE [LARGE SCALE GENOMIC DNA]</scope>
</reference>
<reference evidence="5" key="4">
    <citation type="journal article" date="2004" name="Genome Res.">
        <title>The status, quality, and expansion of the NIH full-length cDNA project: the Mammalian Gene Collection (MGC).</title>
        <authorList>
            <consortium name="The MGC Project Team"/>
        </authorList>
    </citation>
    <scope>NUCLEOTIDE SEQUENCE [LARGE SCALE MRNA]</scope>
    <source>
        <strain evidence="5">FVB/N</strain>
        <tissue evidence="5">Salivary gland</tissue>
    </source>
</reference>
<reference key="5">
    <citation type="journal article" date="2010" name="Cell">
        <title>A tissue-specific atlas of mouse protein phosphorylation and expression.</title>
        <authorList>
            <person name="Huttlin E.L."/>
            <person name="Jedrychowski M.P."/>
            <person name="Elias J.E."/>
            <person name="Goswami T."/>
            <person name="Rad R."/>
            <person name="Beausoleil S.A."/>
            <person name="Villen J."/>
            <person name="Haas W."/>
            <person name="Sowa M.E."/>
            <person name="Gygi S.P."/>
        </authorList>
    </citation>
    <scope>IDENTIFICATION BY MASS SPECTROMETRY [LARGE SCALE ANALYSIS]</scope>
    <source>
        <tissue>Liver</tissue>
    </source>
</reference>
<feature type="chain" id="PRO_0000366205" description="Keratin, type I cuticular Ha3-I">
    <location>
        <begin position="1"/>
        <end position="404"/>
    </location>
</feature>
<feature type="domain" description="IF rod" evidence="3">
    <location>
        <begin position="56"/>
        <end position="367"/>
    </location>
</feature>
<feature type="region of interest" description="Head" evidence="2">
    <location>
        <begin position="1"/>
        <end position="56"/>
    </location>
</feature>
<feature type="region of interest" description="Coil 1A" evidence="2">
    <location>
        <begin position="57"/>
        <end position="91"/>
    </location>
</feature>
<feature type="region of interest" description="Linker 1" evidence="2">
    <location>
        <begin position="92"/>
        <end position="102"/>
    </location>
</feature>
<feature type="region of interest" description="Coil 1B" evidence="2">
    <location>
        <begin position="103"/>
        <end position="203"/>
    </location>
</feature>
<feature type="region of interest" description="Linker 12" evidence="2">
    <location>
        <begin position="204"/>
        <end position="219"/>
    </location>
</feature>
<feature type="region of interest" description="Coil 2" evidence="2">
    <location>
        <begin position="220"/>
        <end position="363"/>
    </location>
</feature>
<feature type="region of interest" description="Tail" evidence="2">
    <location>
        <begin position="364"/>
        <end position="404"/>
    </location>
</feature>
<feature type="site" description="Stutter" evidence="2">
    <location>
        <position position="305"/>
    </location>
</feature>
<feature type="sequence conflict" description="In Ref. 1; BAB26243." evidence="4" ref="1">
    <original>R</original>
    <variation>L</variation>
    <location>
        <position position="240"/>
    </location>
</feature>
<sequence length="404" mass="46137">MPYNCCLPAMSCRTSCSSRPCVPPSCHGCTLPGACNIPANVGNCNWFCEGSFNGNEKETMQFLNDRLASYMEKVRQLERENAELECRIQERNQQQDPLVCPAYQAYFRTIEELQQKILCGKSENARLVVQIDNAKLASDDFRTKYETELSLRQLVEADINSLRRILDELTLCKSDLEAQVESLKEELLCLKQNHEQEVNTLRCQLGDRLNVEVDAAPTVDLNRVLNETRCQYEALVETNRREVEEWYTTQTEELNKQVVSSSEQLQSCQAEIIELRRTVNALEIELQAQHELRNSLENTLTESEARYSSQLSQVQCLITNVESQLGEIRADLERQNQEYQVLLDIRSRLECEINTYRGLLESEDCKLPCNPCATTNACDKPIGPCVPNPCVTRPRCGPCNTFVR</sequence>
<proteinExistence type="evidence at protein level"/>
<evidence type="ECO:0000250" key="1">
    <source>
        <dbReference type="UniProtKB" id="O76009"/>
    </source>
</evidence>
<evidence type="ECO:0000255" key="2"/>
<evidence type="ECO:0000255" key="3">
    <source>
        <dbReference type="PROSITE-ProRule" id="PRU01188"/>
    </source>
</evidence>
<evidence type="ECO:0000305" key="4"/>
<evidence type="ECO:0000312" key="5">
    <source>
        <dbReference type="EMBL" id="AAH29257.1"/>
    </source>
</evidence>
<evidence type="ECO:0000312" key="6">
    <source>
        <dbReference type="EMBL" id="BAB26243.1"/>
    </source>
</evidence>
<evidence type="ECO:0000312" key="7">
    <source>
        <dbReference type="EMBL" id="BAC29777.1"/>
    </source>
</evidence>
<evidence type="ECO:0000312" key="8">
    <source>
        <dbReference type="EMBL" id="CAM22478.1"/>
    </source>
</evidence>
<evidence type="ECO:0000312" key="9">
    <source>
        <dbReference type="MGI" id="MGI:1919138"/>
    </source>
</evidence>